<organism>
    <name type="scientific">Mannheimia succiniciproducens (strain KCTC 0769BP / MBEL55E)</name>
    <dbReference type="NCBI Taxonomy" id="221988"/>
    <lineage>
        <taxon>Bacteria</taxon>
        <taxon>Pseudomonadati</taxon>
        <taxon>Pseudomonadota</taxon>
        <taxon>Gammaproteobacteria</taxon>
        <taxon>Pasteurellales</taxon>
        <taxon>Pasteurellaceae</taxon>
        <taxon>Basfia</taxon>
    </lineage>
</organism>
<name>RS21_MANSM</name>
<accession>Q65RP1</accession>
<evidence type="ECO:0000255" key="1">
    <source>
        <dbReference type="HAMAP-Rule" id="MF_00358"/>
    </source>
</evidence>
<evidence type="ECO:0000256" key="2">
    <source>
        <dbReference type="SAM" id="MobiDB-lite"/>
    </source>
</evidence>
<evidence type="ECO:0000305" key="3"/>
<sequence>MPVIKVRENESFDVALRRFKRSCEKAGILAEVRSREFYEKPTTIRKRENATRAKRHAKRVARENARNTRLY</sequence>
<dbReference type="EMBL" id="AE016827">
    <property type="protein sequence ID" value="AAU38369.1"/>
    <property type="molecule type" value="Genomic_DNA"/>
</dbReference>
<dbReference type="RefSeq" id="WP_005717672.1">
    <property type="nucleotide sequence ID" value="NC_006300.1"/>
</dbReference>
<dbReference type="SMR" id="Q65RP1"/>
<dbReference type="STRING" id="221988.MS1762"/>
<dbReference type="GeneID" id="77206556"/>
<dbReference type="KEGG" id="msu:MS1762"/>
<dbReference type="eggNOG" id="COG0828">
    <property type="taxonomic scope" value="Bacteria"/>
</dbReference>
<dbReference type="HOGENOM" id="CLU_159258_1_0_6"/>
<dbReference type="OrthoDB" id="9799244at2"/>
<dbReference type="Proteomes" id="UP000000607">
    <property type="component" value="Chromosome"/>
</dbReference>
<dbReference type="GO" id="GO:1990904">
    <property type="term" value="C:ribonucleoprotein complex"/>
    <property type="evidence" value="ECO:0007669"/>
    <property type="project" value="UniProtKB-KW"/>
</dbReference>
<dbReference type="GO" id="GO:0005840">
    <property type="term" value="C:ribosome"/>
    <property type="evidence" value="ECO:0007669"/>
    <property type="project" value="UniProtKB-KW"/>
</dbReference>
<dbReference type="GO" id="GO:0003735">
    <property type="term" value="F:structural constituent of ribosome"/>
    <property type="evidence" value="ECO:0007669"/>
    <property type="project" value="InterPro"/>
</dbReference>
<dbReference type="GO" id="GO:0006412">
    <property type="term" value="P:translation"/>
    <property type="evidence" value="ECO:0007669"/>
    <property type="project" value="UniProtKB-UniRule"/>
</dbReference>
<dbReference type="Gene3D" id="1.20.5.1150">
    <property type="entry name" value="Ribosomal protein S8"/>
    <property type="match status" value="1"/>
</dbReference>
<dbReference type="HAMAP" id="MF_00358">
    <property type="entry name" value="Ribosomal_bS21"/>
    <property type="match status" value="1"/>
</dbReference>
<dbReference type="InterPro" id="IPR001911">
    <property type="entry name" value="Ribosomal_bS21"/>
</dbReference>
<dbReference type="InterPro" id="IPR018278">
    <property type="entry name" value="Ribosomal_bS21_CS"/>
</dbReference>
<dbReference type="InterPro" id="IPR038380">
    <property type="entry name" value="Ribosomal_bS21_sf"/>
</dbReference>
<dbReference type="NCBIfam" id="TIGR00030">
    <property type="entry name" value="S21p"/>
    <property type="match status" value="1"/>
</dbReference>
<dbReference type="PANTHER" id="PTHR21109">
    <property type="entry name" value="MITOCHONDRIAL 28S RIBOSOMAL PROTEIN S21"/>
    <property type="match status" value="1"/>
</dbReference>
<dbReference type="PANTHER" id="PTHR21109:SF22">
    <property type="entry name" value="SMALL RIBOSOMAL SUBUNIT PROTEIN BS21"/>
    <property type="match status" value="1"/>
</dbReference>
<dbReference type="Pfam" id="PF01165">
    <property type="entry name" value="Ribosomal_S21"/>
    <property type="match status" value="1"/>
</dbReference>
<dbReference type="PRINTS" id="PR00976">
    <property type="entry name" value="RIBOSOMALS21"/>
</dbReference>
<dbReference type="PROSITE" id="PS01181">
    <property type="entry name" value="RIBOSOMAL_S21"/>
    <property type="match status" value="1"/>
</dbReference>
<feature type="chain" id="PRO_0000266701" description="Small ribosomal subunit protein bS21">
    <location>
        <begin position="1"/>
        <end position="71"/>
    </location>
</feature>
<feature type="region of interest" description="Disordered" evidence="2">
    <location>
        <begin position="47"/>
        <end position="71"/>
    </location>
</feature>
<feature type="compositionally biased region" description="Basic and acidic residues" evidence="2">
    <location>
        <begin position="60"/>
        <end position="71"/>
    </location>
</feature>
<keyword id="KW-0687">Ribonucleoprotein</keyword>
<keyword id="KW-0689">Ribosomal protein</keyword>
<reference key="1">
    <citation type="journal article" date="2004" name="Nat. Biotechnol.">
        <title>The genome sequence of the capnophilic rumen bacterium Mannheimia succiniciproducens.</title>
        <authorList>
            <person name="Hong S.H."/>
            <person name="Kim J.S."/>
            <person name="Lee S.Y."/>
            <person name="In Y.H."/>
            <person name="Choi S.S."/>
            <person name="Rih J.-K."/>
            <person name="Kim C.H."/>
            <person name="Jeong H."/>
            <person name="Hur C.G."/>
            <person name="Kim J.J."/>
        </authorList>
    </citation>
    <scope>NUCLEOTIDE SEQUENCE [LARGE SCALE GENOMIC DNA]</scope>
    <source>
        <strain>KCTC 0769BP / MBEL55E</strain>
    </source>
</reference>
<gene>
    <name evidence="1" type="primary">rpsU</name>
    <name type="ordered locus">MS1762</name>
</gene>
<protein>
    <recommendedName>
        <fullName evidence="1">Small ribosomal subunit protein bS21</fullName>
    </recommendedName>
    <alternativeName>
        <fullName evidence="3">30S ribosomal protein S21</fullName>
    </alternativeName>
</protein>
<comment type="similarity">
    <text evidence="1">Belongs to the bacterial ribosomal protein bS21 family.</text>
</comment>
<proteinExistence type="inferred from homology"/>